<gene>
    <name type="primary">gap</name>
</gene>
<reference key="1">
    <citation type="journal article" date="1991" name="J. Gen. Microbiol.">
        <title>Molecular and evolutionary relationships among enteric bacteria.</title>
        <authorList>
            <person name="Lawrence J.G."/>
            <person name="Ochman H."/>
            <person name="Hartl D.L."/>
        </authorList>
    </citation>
    <scope>NUCLEOTIDE SEQUENCE [GENOMIC DNA]</scope>
    <source>
        <strain>ATCC 33429 / CDC 1182-73</strain>
        <strain>ATCC 33430 / CDC 2928-78</strain>
    </source>
</reference>
<accession>P0DJO7</accession>
<accession>P24749</accession>
<sequence length="294" mass="31373">IVFRAAQERSDIEIVAINDLLDAEYMAYMLKYDSTHGRFNGTVEVKDGHLIVNGKKIRVTAERDPANLKWNEAGVEVVAEATGLFLTDETARKHITAGAKKVVMTGPSKDSTPMFVRGANFDTYAGQDIVSNASCTTNCLAPLAKVVNDNFGIVEALMTTVHATTATQKTVDGPSHKDWRGGRGASQNIIPSSTGAAKAVGKVLPELNGKLTGMAFRVPTPNVSVVDLTVRLAKPATYEEIKKAMKAASEGAMKGVLGYTEDDVVSTDFNGETCTSVFDAKAGIALNDNFVKLV</sequence>
<protein>
    <recommendedName>
        <fullName evidence="1">Glyceraldehyde-3-phosphate dehydrogenase</fullName>
        <shortName evidence="1">GAPDH</shortName>
        <ecNumber evidence="1">1.2.1.12</ecNumber>
    </recommendedName>
    <alternativeName>
        <fullName evidence="1">NAD-dependent glyceraldehyde-3-phosphate dehydrogenase</fullName>
    </alternativeName>
</protein>
<keyword id="KW-0963">Cytoplasm</keyword>
<keyword id="KW-0324">Glycolysis</keyword>
<keyword id="KW-0520">NAD</keyword>
<keyword id="KW-0547">Nucleotide-binding</keyword>
<keyword id="KW-0560">Oxidoreductase</keyword>
<feature type="chain" id="PRO_0000145656" description="Glyceraldehyde-3-phosphate dehydrogenase">
    <location>
        <begin position="1" status="less than"/>
        <end position="294" status="greater than"/>
    </location>
</feature>
<feature type="active site" description="Nucleophile" evidence="1">
    <location>
        <position position="135"/>
    </location>
</feature>
<feature type="binding site" evidence="1">
    <location>
        <position position="19"/>
    </location>
    <ligand>
        <name>NAD(+)</name>
        <dbReference type="ChEBI" id="CHEBI:57540"/>
    </ligand>
</feature>
<feature type="binding site" evidence="1">
    <location>
        <position position="63"/>
    </location>
    <ligand>
        <name>NAD(+)</name>
        <dbReference type="ChEBI" id="CHEBI:57540"/>
    </ligand>
</feature>
<feature type="binding site" evidence="1">
    <location>
        <position position="105"/>
    </location>
    <ligand>
        <name>NAD(+)</name>
        <dbReference type="ChEBI" id="CHEBI:57540"/>
    </ligand>
</feature>
<feature type="binding site" evidence="1">
    <location>
        <begin position="134"/>
        <end position="136"/>
    </location>
    <ligand>
        <name>D-glyceraldehyde 3-phosphate</name>
        <dbReference type="ChEBI" id="CHEBI:59776"/>
    </ligand>
</feature>
<feature type="binding site" evidence="1">
    <location>
        <position position="165"/>
    </location>
    <ligand>
        <name>D-glyceraldehyde 3-phosphate</name>
        <dbReference type="ChEBI" id="CHEBI:59776"/>
    </ligand>
</feature>
<feature type="binding site" evidence="1">
    <location>
        <begin position="194"/>
        <end position="195"/>
    </location>
    <ligand>
        <name>D-glyceraldehyde 3-phosphate</name>
        <dbReference type="ChEBI" id="CHEBI:59776"/>
    </ligand>
</feature>
<feature type="binding site" evidence="1">
    <location>
        <position position="217"/>
    </location>
    <ligand>
        <name>D-glyceraldehyde 3-phosphate</name>
        <dbReference type="ChEBI" id="CHEBI:59776"/>
    </ligand>
</feature>
<feature type="site" description="Activates thiol group during catalysis" evidence="1">
    <location>
        <position position="162"/>
    </location>
</feature>
<feature type="non-terminal residue">
    <location>
        <position position="1"/>
    </location>
</feature>
<feature type="non-terminal residue">
    <location>
        <position position="294"/>
    </location>
</feature>
<proteinExistence type="inferred from homology"/>
<evidence type="ECO:0000250" key="1">
    <source>
        <dbReference type="UniProtKB" id="P0A9B2"/>
    </source>
</evidence>
<evidence type="ECO:0000305" key="2"/>
<comment type="function">
    <text evidence="1">Catalyzes the oxidative phosphorylation of glyceraldehyde 3-phosphate (G3P) to 1,3-bisphosphoglycerate (BPG) using the cofactor NAD. The first reaction step involves the formation of a hemiacetal intermediate between G3P and a cysteine residue, and this hemiacetal intermediate is then oxidized to a thioester, with concomitant reduction of NAD to NADH. The reduced NADH is then exchanged with the second NAD, and the thioester is attacked by a nucleophilic inorganic phosphate to produce BPG.</text>
</comment>
<comment type="catalytic activity">
    <reaction evidence="1">
        <text>D-glyceraldehyde 3-phosphate + phosphate + NAD(+) = (2R)-3-phospho-glyceroyl phosphate + NADH + H(+)</text>
        <dbReference type="Rhea" id="RHEA:10300"/>
        <dbReference type="ChEBI" id="CHEBI:15378"/>
        <dbReference type="ChEBI" id="CHEBI:43474"/>
        <dbReference type="ChEBI" id="CHEBI:57540"/>
        <dbReference type="ChEBI" id="CHEBI:57604"/>
        <dbReference type="ChEBI" id="CHEBI:57945"/>
        <dbReference type="ChEBI" id="CHEBI:59776"/>
        <dbReference type="EC" id="1.2.1.12"/>
    </reaction>
</comment>
<comment type="pathway">
    <text evidence="2">Carbohydrate degradation; glycolysis; pyruvate from D-glyceraldehyde 3-phosphate: step 1/5.</text>
</comment>
<comment type="subunit">
    <text evidence="1">Homotetramer.</text>
</comment>
<comment type="subcellular location">
    <subcellularLocation>
        <location evidence="2">Cytoplasm</location>
    </subcellularLocation>
</comment>
<comment type="similarity">
    <text evidence="2">Belongs to the glyceraldehyde-3-phosphate dehydrogenase family.</text>
</comment>
<dbReference type="EC" id="1.2.1.12" evidence="1"/>
<dbReference type="EMBL" id="M63359">
    <property type="protein sequence ID" value="AAA23852.1"/>
    <property type="molecule type" value="Genomic_DNA"/>
</dbReference>
<dbReference type="EMBL" id="M63360">
    <property type="protein sequence ID" value="AAA23855.1"/>
    <property type="molecule type" value="Genomic_DNA"/>
</dbReference>
<dbReference type="PIR" id="I41220">
    <property type="entry name" value="I41220"/>
</dbReference>
<dbReference type="SMR" id="P0DJO7"/>
<dbReference type="UniPathway" id="UPA00109">
    <property type="reaction ID" value="UER00184"/>
</dbReference>
<dbReference type="GO" id="GO:0005737">
    <property type="term" value="C:cytoplasm"/>
    <property type="evidence" value="ECO:0007669"/>
    <property type="project" value="UniProtKB-SubCell"/>
</dbReference>
<dbReference type="GO" id="GO:0004365">
    <property type="term" value="F:glyceraldehyde-3-phosphate dehydrogenase (NAD+) (phosphorylating) activity"/>
    <property type="evidence" value="ECO:0000250"/>
    <property type="project" value="UniProtKB"/>
</dbReference>
<dbReference type="GO" id="GO:0051287">
    <property type="term" value="F:NAD binding"/>
    <property type="evidence" value="ECO:0000250"/>
    <property type="project" value="UniProtKB"/>
</dbReference>
<dbReference type="GO" id="GO:0050661">
    <property type="term" value="F:NADP binding"/>
    <property type="evidence" value="ECO:0007669"/>
    <property type="project" value="InterPro"/>
</dbReference>
<dbReference type="GO" id="GO:0006006">
    <property type="term" value="P:glucose metabolic process"/>
    <property type="evidence" value="ECO:0007669"/>
    <property type="project" value="InterPro"/>
</dbReference>
<dbReference type="GO" id="GO:0006096">
    <property type="term" value="P:glycolytic process"/>
    <property type="evidence" value="ECO:0007669"/>
    <property type="project" value="UniProtKB-UniPathway"/>
</dbReference>
<dbReference type="CDD" id="cd18126">
    <property type="entry name" value="GAPDH_I_C"/>
    <property type="match status" value="1"/>
</dbReference>
<dbReference type="CDD" id="cd05214">
    <property type="entry name" value="GAPDH_I_N"/>
    <property type="match status" value="1"/>
</dbReference>
<dbReference type="FunFam" id="3.30.360.10:FF:000001">
    <property type="entry name" value="Glyceraldehyde-3-phosphate dehydrogenase"/>
    <property type="match status" value="1"/>
</dbReference>
<dbReference type="FunFam" id="3.40.50.720:FF:000001">
    <property type="entry name" value="Glyceraldehyde-3-phosphate dehydrogenase"/>
    <property type="match status" value="1"/>
</dbReference>
<dbReference type="Gene3D" id="3.30.360.10">
    <property type="entry name" value="Dihydrodipicolinate Reductase, domain 2"/>
    <property type="match status" value="1"/>
</dbReference>
<dbReference type="Gene3D" id="3.40.50.720">
    <property type="entry name" value="NAD(P)-binding Rossmann-like Domain"/>
    <property type="match status" value="1"/>
</dbReference>
<dbReference type="InterPro" id="IPR020831">
    <property type="entry name" value="GlycerAld/Erythrose_P_DH"/>
</dbReference>
<dbReference type="InterPro" id="IPR020830">
    <property type="entry name" value="GlycerAld_3-P_DH_AS"/>
</dbReference>
<dbReference type="InterPro" id="IPR020829">
    <property type="entry name" value="GlycerAld_3-P_DH_cat"/>
</dbReference>
<dbReference type="InterPro" id="IPR020828">
    <property type="entry name" value="GlycerAld_3-P_DH_NAD(P)-bd"/>
</dbReference>
<dbReference type="InterPro" id="IPR006424">
    <property type="entry name" value="Glyceraldehyde-3-P_DH_1"/>
</dbReference>
<dbReference type="InterPro" id="IPR036291">
    <property type="entry name" value="NAD(P)-bd_dom_sf"/>
</dbReference>
<dbReference type="NCBIfam" id="TIGR01534">
    <property type="entry name" value="GAPDH-I"/>
    <property type="match status" value="1"/>
</dbReference>
<dbReference type="PANTHER" id="PTHR10836">
    <property type="entry name" value="GLYCERALDEHYDE 3-PHOSPHATE DEHYDROGENASE"/>
    <property type="match status" value="1"/>
</dbReference>
<dbReference type="PANTHER" id="PTHR10836:SF76">
    <property type="entry name" value="GLYCERALDEHYDE-3-PHOSPHATE DEHYDROGENASE-RELATED"/>
    <property type="match status" value="1"/>
</dbReference>
<dbReference type="Pfam" id="PF02800">
    <property type="entry name" value="Gp_dh_C"/>
    <property type="match status" value="1"/>
</dbReference>
<dbReference type="Pfam" id="PF00044">
    <property type="entry name" value="Gp_dh_N"/>
    <property type="match status" value="1"/>
</dbReference>
<dbReference type="PIRSF" id="PIRSF000149">
    <property type="entry name" value="GAP_DH"/>
    <property type="match status" value="1"/>
</dbReference>
<dbReference type="PRINTS" id="PR00078">
    <property type="entry name" value="G3PDHDRGNASE"/>
</dbReference>
<dbReference type="SMART" id="SM00846">
    <property type="entry name" value="Gp_dh_N"/>
    <property type="match status" value="1"/>
</dbReference>
<dbReference type="SUPFAM" id="SSF55347">
    <property type="entry name" value="Glyceraldehyde-3-phosphate dehydrogenase-like, C-terminal domain"/>
    <property type="match status" value="1"/>
</dbReference>
<dbReference type="SUPFAM" id="SSF51735">
    <property type="entry name" value="NAD(P)-binding Rossmann-fold domains"/>
    <property type="match status" value="1"/>
</dbReference>
<dbReference type="PROSITE" id="PS00071">
    <property type="entry name" value="GAPDH"/>
    <property type="match status" value="1"/>
</dbReference>
<organism>
    <name type="scientific">Shimwellia blattae</name>
    <name type="common">Escherichia blattae</name>
    <dbReference type="NCBI Taxonomy" id="563"/>
    <lineage>
        <taxon>Bacteria</taxon>
        <taxon>Pseudomonadati</taxon>
        <taxon>Pseudomonadota</taxon>
        <taxon>Gammaproteobacteria</taxon>
        <taxon>Enterobacterales</taxon>
        <taxon>Enterobacteriaceae</taxon>
        <taxon>Shimwellia</taxon>
    </lineage>
</organism>
<name>G3P_SHIBL</name>